<protein>
    <recommendedName>
        <fullName evidence="3">Type II restriction enzyme ScaI</fullName>
        <shortName>R.ScaI</shortName>
        <ecNumber>3.1.21.4</ecNumber>
    </recommendedName>
    <alternativeName>
        <fullName>Endonuclease ScaI</fullName>
    </alternativeName>
    <alternativeName>
        <fullName>Type-2 restriction enzyme ScaI</fullName>
    </alternativeName>
</protein>
<accession>O52691</accession>
<feature type="chain" id="PRO_0000077367" description="Type II restriction enzyme ScaI">
    <location>
        <begin position="1"/>
        <end position="227"/>
    </location>
</feature>
<feature type="region of interest" description="Disordered" evidence="1">
    <location>
        <begin position="12"/>
        <end position="35"/>
    </location>
</feature>
<sequence>MINDQLPRWVREARVGTRTGGPAMRPKTSDSPYFGWDSEDWPEVTRQLLSEQPLSGDTLVDAVLASWESIFESRLGSGFHIGTQIRPTPQVMGFLLHALIPLELANGDPSWRADLNSSEKDLVYQPDHKYSIEMKTSSHKDQIFGNRSFGVENPGKGKKAKDGYYVAVNFEKWSDAPGRLPRIRTIRYGWLDHTDWVAQKSQTGQQSSLPAVVSNTQLLAIHTGGQR</sequence>
<name>T2S1_STRCS</name>
<proteinExistence type="predicted"/>
<keyword id="KW-0255">Endonuclease</keyword>
<keyword id="KW-0378">Hydrolase</keyword>
<keyword id="KW-0540">Nuclease</keyword>
<keyword id="KW-0680">Restriction system</keyword>
<gene>
    <name evidence="4" type="primary">scaIR</name>
</gene>
<dbReference type="EC" id="3.1.21.4"/>
<dbReference type="EMBL" id="AF044681">
    <property type="protein sequence ID" value="AAC97177.1"/>
    <property type="molecule type" value="Genomic_DNA"/>
</dbReference>
<dbReference type="BindingDB" id="O52691"/>
<dbReference type="ChEMBL" id="CHEMBL5782"/>
<dbReference type="DrugCentral" id="O52691"/>
<dbReference type="REBASE" id="1628">
    <property type="entry name" value="ScaI"/>
</dbReference>
<dbReference type="BRENDA" id="3.1.21.4">
    <property type="organism ID" value="5987"/>
</dbReference>
<dbReference type="PRO" id="PR:O52691"/>
<dbReference type="GO" id="GO:0009036">
    <property type="term" value="F:type II site-specific deoxyribonuclease activity"/>
    <property type="evidence" value="ECO:0007669"/>
    <property type="project" value="UniProtKB-EC"/>
</dbReference>
<dbReference type="GO" id="GO:0009307">
    <property type="term" value="P:DNA restriction-modification system"/>
    <property type="evidence" value="ECO:0007669"/>
    <property type="project" value="UniProtKB-KW"/>
</dbReference>
<dbReference type="InterPro" id="IPR019069">
    <property type="entry name" value="Restrct_endonuc_II_ScaI"/>
</dbReference>
<dbReference type="Pfam" id="PF09569">
    <property type="entry name" value="RE_ScaI"/>
    <property type="match status" value="1"/>
</dbReference>
<reference key="1">
    <citation type="journal article" date="1998" name="Mol. Gen. Genet.">
        <title>Cloning and expression of the ApaLI, NspI, NspHI, SacI, ScaI, and SapI restriction-modification systems in Escherichia coli.</title>
        <authorList>
            <person name="Xu S.-Y."/>
            <person name="Xiao J.-P."/>
            <person name="Ettwiller L."/>
            <person name="Holden M."/>
            <person name="Aliotta J."/>
            <person name="Poh C.L."/>
            <person name="Dalton M."/>
            <person name="Robinson D.P."/>
            <person name="Petronzio T.R."/>
            <person name="Moran L."/>
            <person name="Ganatra M."/>
            <person name="Ware J."/>
            <person name="Slatko B."/>
            <person name="Benner J. II"/>
        </authorList>
    </citation>
    <scope>NUCLEOTIDE SEQUENCE [GENOMIC DNA]</scope>
    <scope>FUNCTION</scope>
</reference>
<reference key="2">
    <citation type="journal article" date="2003" name="Nucleic Acids Res.">
        <title>A nomenclature for restriction enzymes, DNA methyltransferases, homing endonucleases and their genes.</title>
        <authorList>
            <person name="Roberts R.J."/>
            <person name="Belfort M."/>
            <person name="Bestor T."/>
            <person name="Bhagwat A.S."/>
            <person name="Bickle T.A."/>
            <person name="Bitinaite J."/>
            <person name="Blumenthal R.M."/>
            <person name="Degtyarev S.K."/>
            <person name="Dryden D.T."/>
            <person name="Dybvig K."/>
            <person name="Firman K."/>
            <person name="Gromova E.S."/>
            <person name="Gumport R.I."/>
            <person name="Halford S.E."/>
            <person name="Hattman S."/>
            <person name="Heitman J."/>
            <person name="Hornby D.P."/>
            <person name="Janulaitis A."/>
            <person name="Jeltsch A."/>
            <person name="Josephsen J."/>
            <person name="Kiss A."/>
            <person name="Klaenhammer T.R."/>
            <person name="Kobayashi I."/>
            <person name="Kong H."/>
            <person name="Krueger D.H."/>
            <person name="Lacks S."/>
            <person name="Marinus M.G."/>
            <person name="Miyahara M."/>
            <person name="Morgan R.D."/>
            <person name="Murray N.E."/>
            <person name="Nagaraja V."/>
            <person name="Piekarowicz A."/>
            <person name="Pingoud A."/>
            <person name="Raleigh E."/>
            <person name="Rao D.N."/>
            <person name="Reich N."/>
            <person name="Repin V.E."/>
            <person name="Selker E.U."/>
            <person name="Shaw P.C."/>
            <person name="Stein D.C."/>
            <person name="Stoddard B.L."/>
            <person name="Szybalski W."/>
            <person name="Trautner T.A."/>
            <person name="Van Etten J.L."/>
            <person name="Vitor J.M."/>
            <person name="Wilson G.G."/>
            <person name="Xu S.Y."/>
        </authorList>
    </citation>
    <scope>NOMENCLATURE</scope>
    <scope>SUBTYPE</scope>
</reference>
<comment type="function">
    <text evidence="2 3">A P subtype restriction enzyme that recognizes the double-stranded sequence 5'-AGTACT-3' and cleaves after T-3.</text>
</comment>
<comment type="catalytic activity">
    <reaction>
        <text>Endonucleolytic cleavage of DNA to give specific double-stranded fragments with terminal 5'-phosphates.</text>
        <dbReference type="EC" id="3.1.21.4"/>
    </reaction>
</comment>
<evidence type="ECO:0000256" key="1">
    <source>
        <dbReference type="SAM" id="MobiDB-lite"/>
    </source>
</evidence>
<evidence type="ECO:0000269" key="2">
    <source>
    </source>
</evidence>
<evidence type="ECO:0000303" key="3">
    <source>
    </source>
</evidence>
<evidence type="ECO:0000303" key="4">
    <source>
    </source>
</evidence>
<organism>
    <name type="scientific">Streptomyces caespitosus</name>
    <dbReference type="NCBI Taxonomy" id="53502"/>
    <lineage>
        <taxon>Bacteria</taxon>
        <taxon>Bacillati</taxon>
        <taxon>Actinomycetota</taxon>
        <taxon>Actinomycetes</taxon>
        <taxon>Kitasatosporales</taxon>
        <taxon>Streptomycetaceae</taxon>
        <taxon>Streptomyces</taxon>
    </lineage>
</organism>